<protein>
    <recommendedName>
        <fullName>Histone H2B type 1-A</fullName>
    </recommendedName>
    <alternativeName>
        <fullName>Histone H2B, testis</fullName>
    </alternativeName>
    <alternativeName>
        <fullName>Testis-specific histone H2B</fullName>
    </alternativeName>
</protein>
<keyword id="KW-0007">Acetylation</keyword>
<keyword id="KW-0158">Chromosome</keyword>
<keyword id="KW-0903">Direct protein sequencing</keyword>
<keyword id="KW-0238">DNA-binding</keyword>
<keyword id="KW-1017">Isopeptide bond</keyword>
<keyword id="KW-0488">Methylation</keyword>
<keyword id="KW-0544">Nucleosome core</keyword>
<keyword id="KW-0539">Nucleus</keyword>
<keyword id="KW-0597">Phosphoprotein</keyword>
<keyword id="KW-1185">Reference proteome</keyword>
<keyword id="KW-0832">Ubl conjugation</keyword>
<accession>Q00729</accession>
<accession>Q64677</accession>
<name>H2B1A_RAT</name>
<feature type="initiator methionine" description="Removed" evidence="1">
    <location>
        <position position="1"/>
    </location>
</feature>
<feature type="chain" id="PRO_0000071844" description="Histone H2B type 1-A">
    <location>
        <begin position="2"/>
        <end position="127"/>
    </location>
</feature>
<feature type="region of interest" description="Disordered" evidence="9">
    <location>
        <begin position="1"/>
        <end position="32"/>
    </location>
</feature>
<feature type="modified residue" description="N-acetylproline" evidence="1">
    <location>
        <position position="2"/>
    </location>
</feature>
<feature type="modified residue" description="N6-acetyllysine; alternate" evidence="10">
    <location>
        <position position="7"/>
    </location>
</feature>
<feature type="modified residue" description="N6-crotonyllysine; alternate" evidence="5">
    <location>
        <position position="7"/>
    </location>
</feature>
<feature type="modified residue" description="N6-lactoyllysine; alternate" evidence="2">
    <location>
        <position position="7"/>
    </location>
</feature>
<feature type="modified residue" description="N6-acetyllysine; alternate" evidence="4">
    <location>
        <position position="13"/>
    </location>
</feature>
<feature type="modified residue" description="N6-crotonyllysine; alternate" evidence="5">
    <location>
        <position position="13"/>
    </location>
</feature>
<feature type="modified residue" description="N6-lactoyllysine; alternate" evidence="2">
    <location>
        <position position="13"/>
    </location>
</feature>
<feature type="modified residue" description="N6-acetyllysine; alternate" evidence="10 11">
    <location>
        <position position="14"/>
    </location>
</feature>
<feature type="modified residue" description="N6-crotonyllysine; alternate" evidence="5">
    <location>
        <position position="14"/>
    </location>
</feature>
<feature type="modified residue" description="N6-acetyllysine; alternate" evidence="10 11">
    <location>
        <position position="17"/>
    </location>
</feature>
<feature type="modified residue" description="N6-crotonyllysine; alternate" evidence="5">
    <location>
        <position position="17"/>
    </location>
</feature>
<feature type="modified residue" description="N6-lactoyllysine; alternate" evidence="2">
    <location>
        <position position="17"/>
    </location>
</feature>
<feature type="modified residue" description="N6-acetyllysine; alternate" evidence="11">
    <location>
        <position position="18"/>
    </location>
</feature>
<feature type="modified residue" description="N6-crotonyllysine; alternate" evidence="5">
    <location>
        <position position="18"/>
    </location>
</feature>
<feature type="modified residue" description="N6-lactoyllysine; alternate" evidence="2">
    <location>
        <position position="18"/>
    </location>
</feature>
<feature type="modified residue" description="N6-acetyllysine; alternate" evidence="10 11">
    <location>
        <position position="22"/>
    </location>
</feature>
<feature type="modified residue" description="N6-crotonyllysine; alternate" evidence="5">
    <location>
        <position position="22"/>
    </location>
</feature>
<feature type="modified residue" description="N6-lactoyllysine; alternate" evidence="2">
    <location>
        <position position="22"/>
    </location>
</feature>
<feature type="modified residue" description="N6-acetyllysine; alternate" evidence="2">
    <location>
        <position position="25"/>
    </location>
</feature>
<feature type="modified residue" description="N6-crotonyllysine; alternate" evidence="5">
    <location>
        <position position="25"/>
    </location>
</feature>
<feature type="modified residue" description="N6-lactoyllysine; alternate" evidence="2">
    <location>
        <position position="25"/>
    </location>
</feature>
<feature type="modified residue" description="N6-crotonyllysine; alternate" evidence="5">
    <location>
        <position position="36"/>
    </location>
</feature>
<feature type="modified residue" description="N6-succinyllysine; alternate" evidence="2">
    <location>
        <position position="36"/>
    </location>
</feature>
<feature type="modified residue" description="Phosphoserine" evidence="7">
    <location>
        <position position="38"/>
    </location>
</feature>
<feature type="modified residue" description="N6-lactoyllysine; alternate" evidence="2">
    <location>
        <position position="45"/>
    </location>
</feature>
<feature type="modified residue" description="N6-methyllysine" evidence="4">
    <location>
        <position position="48"/>
    </location>
</feature>
<feature type="modified residue" description="N6,N6-dimethyllysine" evidence="4">
    <location>
        <position position="59"/>
    </location>
</feature>
<feature type="modified residue" description="Dimethylated arginine" evidence="8">
    <location>
        <position position="81"/>
    </location>
</feature>
<feature type="modified residue" description="N6,N6,N6-trimethyllysine; alternate" evidence="8">
    <location>
        <position position="87"/>
    </location>
</feature>
<feature type="modified residue" description="N6-acetyllysine; alternate" evidence="8">
    <location>
        <position position="87"/>
    </location>
</feature>
<feature type="modified residue" description="N6-lactoyllysine; alternate" evidence="2">
    <location>
        <position position="87"/>
    </location>
</feature>
<feature type="modified residue" description="Omega-N-methylarginine" evidence="8">
    <location>
        <position position="88"/>
    </location>
</feature>
<feature type="modified residue" description="Omega-N-methylarginine" evidence="8">
    <location>
        <position position="94"/>
    </location>
</feature>
<feature type="modified residue" description="N6-lactoyllysine; alternate" evidence="2">
    <location>
        <position position="110"/>
    </location>
</feature>
<feature type="modified residue" description="N6-methyllysine" evidence="4">
    <location>
        <position position="110"/>
    </location>
</feature>
<feature type="modified residue" description="Phosphothreonine" evidence="11">
    <location>
        <position position="117"/>
    </location>
</feature>
<feature type="modified residue" description="N6-lactoyllysine; alternate" evidence="2">
    <location>
        <position position="118"/>
    </location>
</feature>
<feature type="modified residue" description="N6-methylated lysine; alternate" evidence="11">
    <location>
        <position position="118"/>
    </location>
</feature>
<feature type="modified residue" description="N6-succinyllysine; alternate" evidence="2">
    <location>
        <position position="118"/>
    </location>
</feature>
<feature type="modified residue" description="N6-lactoyllysine; alternate" evidence="2">
    <location>
        <position position="122"/>
    </location>
</feature>
<feature type="modified residue" description="N6-succinyllysine; alternate" evidence="2">
    <location>
        <position position="122"/>
    </location>
</feature>
<feature type="cross-link" description="Glycyl lysine isopeptide (Lys-Gly) (interchain with G-Cter in SUMO2); alternate" evidence="3">
    <location>
        <position position="7"/>
    </location>
</feature>
<feature type="cross-link" description="Glycyl lysine isopeptide (Lys-Gly) (interchain with G-Cter in SUMO2); alternate" evidence="6">
    <location>
        <position position="22"/>
    </location>
</feature>
<feature type="cross-link" description="Glycyl lysine isopeptide (Lys-Gly) (interchain with G-Cter in ubiquitin); alternate" evidence="2">
    <location>
        <position position="36"/>
    </location>
</feature>
<feature type="cross-link" description="Glycyl lysine isopeptide (Lys-Gly) (interchain with G-Cter in ubiquitin); alternate" evidence="8">
    <location>
        <position position="122"/>
    </location>
</feature>
<feature type="sequence conflict" description="In Ref. 1; AAA74755/AAA74756." evidence="13" ref="1">
    <original>K</original>
    <variation>E</variation>
    <location>
        <position position="36"/>
    </location>
</feature>
<reference key="1">
    <citation type="journal article" date="1987" name="Dev. Biol.">
        <title>Molecular cloning and differential expression of somatic and testis-specific H2B histone genes during rat spermatogenesis.</title>
        <authorList>
            <person name="Kim Y.-J."/>
            <person name="Hwang I."/>
            <person name="Tres L.L."/>
            <person name="Kierszenbaum A.L."/>
            <person name="Chae C.-B."/>
        </authorList>
    </citation>
    <scope>NUCLEOTIDE SEQUENCE [MRNA]</scope>
    <source>
        <strain>Sprague-Dawley</strain>
        <tissue>Testis</tissue>
    </source>
</reference>
<reference key="2">
    <citation type="journal article" date="1991" name="Nucleic Acids Res.">
        <title>Presence of a bi-directional S phase-specific transcription regulatory element in the promoter shared by testis-specific TH2A and TH2B histone genes.</title>
        <authorList>
            <person name="Huh N.E."/>
            <person name="Hwang I."/>
            <person name="Lim K."/>
            <person name="You K.H."/>
            <person name="Chae C.-B."/>
        </authorList>
    </citation>
    <scope>NUCLEOTIDE SEQUENCE [GENOMIC DNA]</scope>
    <source>
        <strain>Sprague-Dawley</strain>
        <tissue>Testis</tissue>
    </source>
</reference>
<reference key="3">
    <citation type="journal article" date="1989" name="Mol. Cell. Biol.">
        <title>S-phase-specific transcription regulatory elements are present in a replication-independent testis-specific H2B histone gene.</title>
        <authorList>
            <person name="Hwang I."/>
            <person name="Chae C.-B."/>
        </authorList>
    </citation>
    <scope>NUCLEOTIDE SEQUENCE [GENOMIC DNA] OF 1-6</scope>
    <scope>TISSUE SPECIFICITY</scope>
    <source>
        <strain>Sprague-Dawley</strain>
        <tissue>Testis</tissue>
    </source>
</reference>
<reference key="4">
    <citation type="submission" date="2007-09" db="UniProtKB">
        <authorList>
            <person name="Lubec G."/>
            <person name="Chen W.-Q."/>
            <person name="Kang S.U."/>
            <person name="Lubec S."/>
        </authorList>
    </citation>
    <scope>PROTEIN SEQUENCE OF 49-74 AND 102-110</scope>
    <scope>IDENTIFICATION BY MASS SPECTROMETRY</scope>
    <source>
        <strain>Sprague-Dawley</strain>
        <tissue>Brain</tissue>
        <tissue>Hippocampus</tissue>
    </source>
</reference>
<reference key="5">
    <citation type="journal article" date="2005" name="Mol. Cell. Biochem.">
        <title>Inhibition of core histones acetylation by carcinogenic nickel(II).</title>
        <authorList>
            <person name="Golebiowski F."/>
            <person name="Kasprzak K.S."/>
        </authorList>
    </citation>
    <scope>ACETYLATION AT LYS-7; LYS-14; LYS-17 AND LYS-22</scope>
</reference>
<reference key="6">
    <citation type="journal article" date="2009" name="Mol. Hum. Reprod.">
        <title>Mass spectrometry analysis of dynamic post-translational modifications of TH2B during spermatogenesis.</title>
        <authorList>
            <person name="Lu S."/>
            <person name="Xie Y.M."/>
            <person name="Li X."/>
            <person name="Luo J."/>
            <person name="Shi X.Q."/>
            <person name="Hong X."/>
            <person name="Pan Y.H."/>
            <person name="Ma X."/>
        </authorList>
    </citation>
    <scope>ACETYLATION AT LYS-14; LYS-17; LYS-18 AND LYS-22</scope>
    <scope>METHYLATION AT LYS-118</scope>
    <scope>PHOSPHORYLATION AT THR-117</scope>
</reference>
<proteinExistence type="evidence at protein level"/>
<organism>
    <name type="scientific">Rattus norvegicus</name>
    <name type="common">Rat</name>
    <dbReference type="NCBI Taxonomy" id="10116"/>
    <lineage>
        <taxon>Eukaryota</taxon>
        <taxon>Metazoa</taxon>
        <taxon>Chordata</taxon>
        <taxon>Craniata</taxon>
        <taxon>Vertebrata</taxon>
        <taxon>Euteleostomi</taxon>
        <taxon>Mammalia</taxon>
        <taxon>Eutheria</taxon>
        <taxon>Euarchontoglires</taxon>
        <taxon>Glires</taxon>
        <taxon>Rodentia</taxon>
        <taxon>Myomorpha</taxon>
        <taxon>Muroidea</taxon>
        <taxon>Muridae</taxon>
        <taxon>Murinae</taxon>
        <taxon>Rattus</taxon>
    </lineage>
</organism>
<comment type="function">
    <text evidence="5">Variant histone specifically required to direct the transformation of dissociating nucleosomes to protamine in male germ cells. Entirely replaces classical histone H2B prior nucleosome to protamine transition and probably acts as a nucleosome dissociating factor that creates a more dynamic chromatin, facilitating the large-scale exchange of histones. Core component of nucleosome. Nucleosomes wrap and compact DNA into chromatin, limiting DNA accessibility to the cellular machineries which require DNA as a template. Histones thereby play a central role in transcription regulation, DNA repair, DNA replication and chromosomal stability. DNA accessibility is regulated via a complex set of post-translational modifications of histones, also called histone code, and nucleosome remodeling.</text>
</comment>
<comment type="subunit">
    <text evidence="5">The nucleosome is a histone octamer containing two molecules each of H2A, H2B, H3 and H4 assembled in one H3-H4 heterotetramer and two H2A-H2B heterodimers.</text>
</comment>
<comment type="subcellular location">
    <subcellularLocation>
        <location evidence="5">Nucleus</location>
    </subcellularLocation>
    <subcellularLocation>
        <location evidence="5">Chromosome</location>
    </subcellularLocation>
</comment>
<comment type="tissue specificity">
    <text evidence="12">Testis. Expressed in pachytene spermatocytes during meiotic prophase I in the absence of any significant DNA synthesis.</text>
</comment>
<comment type="PTM">
    <text evidence="8">Monoubiquitination at Lys-36 by the MSL1/MSL2 dimer is required for histone H3 'Lys-4' (H3K4me) and 'Lys-79' (H3K79me) methylation and transcription activation at specific gene loci, such as HOXA9 and MEIS1 loci. Similarly, monoubiquitination of Lys-122 (H2BK120Ub) by the RNF20/40 complex gives a specific tag for epigenetic transcriptional activation and is also prerequisite for histone H3 'Lys-4' and 'Lys-79' methylation. It also functions cooperatively with the FACT dimer to stimulate elongation by RNA polymerase II. H2BK120Ub also acts as a regulator of mRNA splicing: deubiquitination by USP49 is required for efficient cotranscriptional splicing of a large set of exons (By similarity).</text>
</comment>
<comment type="PTM">
    <text evidence="5">Crotonylation (Kcr) is specifically present in male germ cells and marks testis-specific genes in post-meiotic cells, including X-linked genes that escape sex chromosome inactivation in haploid cells. Crotonylation marks active promoters and enhancers and confers resistance to transcriptional repressors. It is also associated with post-meiotically activated genes on autosomes (By similarity).</text>
</comment>
<comment type="PTM">
    <text evidence="10 11">Acetylated during spermatogenesis. Acetylated form is most abundant in spermatogonia compared to spermatocytes and round spermatids.</text>
</comment>
<comment type="PTM">
    <text evidence="11">Phosphorylated at Thr-117 in spermatogonia, spermatocytes and round spermatids.</text>
</comment>
<comment type="PTM">
    <text evidence="11">Methylated at Lys-118 in spermatogonia, spermatocytes and round spermatids.</text>
</comment>
<comment type="PTM">
    <text evidence="2">Lactylated in macrophages by EP300/P300 by using lactoyl-CoA directly derived from endogenous or exogenous lactate, leading to stimulates gene transcription.</text>
</comment>
<comment type="similarity">
    <text evidence="13">Belongs to the histone H2B family.</text>
</comment>
<gene>
    <name evidence="14" type="primary">H2bc1</name>
    <name evidence="14" type="synonym">Hist1h2ba</name>
    <name type="synonym">Th2b</name>
</gene>
<sequence length="127" mass="14225">MPEVSAKGTTISKKGFKKAVTKTQKKEGRKRKRCRKESYSIYIYKVLKQVHPDTGISSKAMSIMNSFVTDIFERIAGEASRLAHYNKRSTITSREIQTAVRLLLPGELAKHAVSEGTKAVTKYTSSK</sequence>
<dbReference type="EMBL" id="M18045">
    <property type="protein sequence ID" value="AAA74755.1"/>
    <property type="molecule type" value="mRNA"/>
</dbReference>
<dbReference type="EMBL" id="M18046">
    <property type="protein sequence ID" value="AAA74756.1"/>
    <property type="molecule type" value="mRNA"/>
</dbReference>
<dbReference type="EMBL" id="X59962">
    <property type="protein sequence ID" value="CAA42587.1"/>
    <property type="molecule type" value="Genomic_DNA"/>
</dbReference>
<dbReference type="EMBL" id="M25771">
    <property type="protein sequence ID" value="AAA74754.1"/>
    <property type="molecule type" value="Genomic_DNA"/>
</dbReference>
<dbReference type="PIR" id="A45945">
    <property type="entry name" value="A45945"/>
</dbReference>
<dbReference type="PIR" id="S26187">
    <property type="entry name" value="S26187"/>
</dbReference>
<dbReference type="RefSeq" id="NP_072169.1">
    <property type="nucleotide sequence ID" value="NM_022643.1"/>
</dbReference>
<dbReference type="SMR" id="Q00729"/>
<dbReference type="FunCoup" id="Q00729">
    <property type="interactions" value="393"/>
</dbReference>
<dbReference type="STRING" id="10116.ENSRNOP00000022630"/>
<dbReference type="iPTMnet" id="Q00729"/>
<dbReference type="PhosphoSitePlus" id="Q00729"/>
<dbReference type="jPOST" id="Q00729"/>
<dbReference type="PaxDb" id="10116-ENSRNOP00000022630"/>
<dbReference type="GeneID" id="24829"/>
<dbReference type="KEGG" id="rno:24829"/>
<dbReference type="UCSC" id="RGD:3855">
    <property type="organism name" value="rat"/>
</dbReference>
<dbReference type="AGR" id="RGD:3855"/>
<dbReference type="CTD" id="255626"/>
<dbReference type="RGD" id="3855">
    <property type="gene designation" value="H2bc1"/>
</dbReference>
<dbReference type="VEuPathDB" id="HostDB:ENSRNOG00000069905"/>
<dbReference type="eggNOG" id="KOG1744">
    <property type="taxonomic scope" value="Eukaryota"/>
</dbReference>
<dbReference type="HOGENOM" id="CLU_075666_2_1_1"/>
<dbReference type="InParanoid" id="Q00729"/>
<dbReference type="OrthoDB" id="9832711at2759"/>
<dbReference type="PhylomeDB" id="Q00729"/>
<dbReference type="TreeFam" id="TF300212"/>
<dbReference type="Reactome" id="R-RNO-110330">
    <property type="pathway name" value="Recognition and association of DNA glycosylase with site containing an affected purine"/>
</dbReference>
<dbReference type="Reactome" id="R-RNO-110331">
    <property type="pathway name" value="Cleavage of the damaged purine"/>
</dbReference>
<dbReference type="Reactome" id="R-RNO-212300">
    <property type="pathway name" value="PRC2 methylates histones and DNA"/>
</dbReference>
<dbReference type="Reactome" id="R-RNO-2299718">
    <property type="pathway name" value="Condensation of Prophase Chromosomes"/>
</dbReference>
<dbReference type="Reactome" id="R-RNO-2559580">
    <property type="pathway name" value="Oxidative Stress Induced Senescence"/>
</dbReference>
<dbReference type="Reactome" id="R-RNO-2559582">
    <property type="pathway name" value="Senescence-Associated Secretory Phenotype (SASP)"/>
</dbReference>
<dbReference type="Reactome" id="R-RNO-2559586">
    <property type="pathway name" value="DNA Damage/Telomere Stress Induced Senescence"/>
</dbReference>
<dbReference type="Reactome" id="R-RNO-3214847">
    <property type="pathway name" value="HATs acetylate histones"/>
</dbReference>
<dbReference type="Reactome" id="R-RNO-427359">
    <property type="pathway name" value="SIRT1 negatively regulates rRNA expression"/>
</dbReference>
<dbReference type="Reactome" id="R-RNO-427413">
    <property type="pathway name" value="NoRC negatively regulates rRNA expression"/>
</dbReference>
<dbReference type="Reactome" id="R-RNO-5250924">
    <property type="pathway name" value="B-WICH complex positively regulates rRNA expression"/>
</dbReference>
<dbReference type="Reactome" id="R-RNO-5578749">
    <property type="pathway name" value="Transcriptional regulation by small RNAs"/>
</dbReference>
<dbReference type="Reactome" id="R-RNO-5625886">
    <property type="pathway name" value="Activated PKN1 stimulates transcription of AR (androgen receptor) regulated genes KLK2 and KLK3"/>
</dbReference>
<dbReference type="Reactome" id="R-RNO-5693565">
    <property type="pathway name" value="Recruitment and ATM-mediated phosphorylation of repair and signaling proteins at DNA double strand breaks"/>
</dbReference>
<dbReference type="Reactome" id="R-RNO-5693571">
    <property type="pathway name" value="Nonhomologous End-Joining (NHEJ)"/>
</dbReference>
<dbReference type="Reactome" id="R-RNO-5693607">
    <property type="pathway name" value="Processing of DNA double-strand break ends"/>
</dbReference>
<dbReference type="Reactome" id="R-RNO-606279">
    <property type="pathway name" value="Deposition of new CENPA-containing nucleosomes at the centromere"/>
</dbReference>
<dbReference type="Reactome" id="R-RNO-68616">
    <property type="pathway name" value="Assembly of the ORC complex at the origin of replication"/>
</dbReference>
<dbReference type="Reactome" id="R-RNO-69473">
    <property type="pathway name" value="G2/M DNA damage checkpoint"/>
</dbReference>
<dbReference type="Reactome" id="R-RNO-73728">
    <property type="pathway name" value="RNA Polymerase I Promoter Opening"/>
</dbReference>
<dbReference type="Reactome" id="R-RNO-73772">
    <property type="pathway name" value="RNA Polymerase I Promoter Escape"/>
</dbReference>
<dbReference type="Reactome" id="R-RNO-8866654">
    <property type="pathway name" value="E3 ubiquitin ligases ubiquitinate target proteins"/>
</dbReference>
<dbReference type="Reactome" id="R-RNO-8936459">
    <property type="pathway name" value="RUNX1 regulates genes involved in megakaryocyte differentiation and platelet function"/>
</dbReference>
<dbReference type="Reactome" id="R-RNO-9018519">
    <property type="pathway name" value="Estrogen-dependent gene expression"/>
</dbReference>
<dbReference type="Reactome" id="R-RNO-9841922">
    <property type="pathway name" value="MLL4 and MLL3 complexes regulate expression of PPARG target genes in adipogenesis and hepatic steatosis"/>
</dbReference>
<dbReference type="Reactome" id="R-RNO-9843940">
    <property type="pathway name" value="Regulation of endogenous retroelements by KRAB-ZFP proteins"/>
</dbReference>
<dbReference type="Reactome" id="R-RNO-9843970">
    <property type="pathway name" value="Regulation of endogenous retroelements by the Human Silencing Hub (HUSH) complex"/>
</dbReference>
<dbReference type="CD-CODE" id="246D7041">
    <property type="entry name" value="Chromatoid body"/>
</dbReference>
<dbReference type="PRO" id="PR:Q00729"/>
<dbReference type="Proteomes" id="UP000002494">
    <property type="component" value="Chromosome 17"/>
</dbReference>
<dbReference type="Bgee" id="ENSRNOG00000016865">
    <property type="expression patterns" value="Expressed in testis and 8 other cell types or tissues"/>
</dbReference>
<dbReference type="GO" id="GO:0009986">
    <property type="term" value="C:cell surface"/>
    <property type="evidence" value="ECO:0000266"/>
    <property type="project" value="RGD"/>
</dbReference>
<dbReference type="GO" id="GO:0001674">
    <property type="term" value="C:female germ cell nucleus"/>
    <property type="evidence" value="ECO:0000266"/>
    <property type="project" value="RGD"/>
</dbReference>
<dbReference type="GO" id="GO:0000786">
    <property type="term" value="C:nucleosome"/>
    <property type="evidence" value="ECO:0000250"/>
    <property type="project" value="UniProtKB"/>
</dbReference>
<dbReference type="GO" id="GO:0005634">
    <property type="term" value="C:nucleus"/>
    <property type="evidence" value="ECO:0000266"/>
    <property type="project" value="RGD"/>
</dbReference>
<dbReference type="GO" id="GO:0003677">
    <property type="term" value="F:DNA binding"/>
    <property type="evidence" value="ECO:0000314"/>
    <property type="project" value="RGD"/>
</dbReference>
<dbReference type="GO" id="GO:0042393">
    <property type="term" value="F:histone binding"/>
    <property type="evidence" value="ECO:0000266"/>
    <property type="project" value="RGD"/>
</dbReference>
<dbReference type="GO" id="GO:0046982">
    <property type="term" value="F:protein heterodimerization activity"/>
    <property type="evidence" value="ECO:0007669"/>
    <property type="project" value="InterPro"/>
</dbReference>
<dbReference type="GO" id="GO:0030527">
    <property type="term" value="F:structural constituent of chromatin"/>
    <property type="evidence" value="ECO:0007669"/>
    <property type="project" value="InterPro"/>
</dbReference>
<dbReference type="GO" id="GO:0006325">
    <property type="term" value="P:chromatin organization"/>
    <property type="evidence" value="ECO:0000266"/>
    <property type="project" value="RGD"/>
</dbReference>
<dbReference type="GO" id="GO:0051276">
    <property type="term" value="P:chromosome organization"/>
    <property type="evidence" value="ECO:0000266"/>
    <property type="project" value="RGD"/>
</dbReference>
<dbReference type="GO" id="GO:0006954">
    <property type="term" value="P:inflammatory response"/>
    <property type="evidence" value="ECO:0000266"/>
    <property type="project" value="RGD"/>
</dbReference>
<dbReference type="GO" id="GO:0071674">
    <property type="term" value="P:mononuclear cell migration"/>
    <property type="evidence" value="ECO:0000266"/>
    <property type="project" value="RGD"/>
</dbReference>
<dbReference type="GO" id="GO:0006334">
    <property type="term" value="P:nucleosome assembly"/>
    <property type="evidence" value="ECO:0000250"/>
    <property type="project" value="UniProtKB"/>
</dbReference>
<dbReference type="GO" id="GO:0006337">
    <property type="term" value="P:nucleosome disassembly"/>
    <property type="evidence" value="ECO:0000250"/>
    <property type="project" value="UniProtKB"/>
</dbReference>
<dbReference type="GO" id="GO:0031639">
    <property type="term" value="P:plasminogen activation"/>
    <property type="evidence" value="ECO:0000266"/>
    <property type="project" value="RGD"/>
</dbReference>
<dbReference type="GO" id="GO:0035092">
    <property type="term" value="P:sperm DNA condensation"/>
    <property type="evidence" value="ECO:0000250"/>
    <property type="project" value="UniProtKB"/>
</dbReference>
<dbReference type="CDD" id="cd22910">
    <property type="entry name" value="HFD_H2B"/>
    <property type="match status" value="1"/>
</dbReference>
<dbReference type="FunFam" id="1.10.20.10:FF:000003">
    <property type="entry name" value="Histone H2B"/>
    <property type="match status" value="1"/>
</dbReference>
<dbReference type="Gene3D" id="1.10.20.10">
    <property type="entry name" value="Histone, subunit A"/>
    <property type="match status" value="1"/>
</dbReference>
<dbReference type="InterPro" id="IPR009072">
    <property type="entry name" value="Histone-fold"/>
</dbReference>
<dbReference type="InterPro" id="IPR007125">
    <property type="entry name" value="Histone_H2A/H2B/H3"/>
</dbReference>
<dbReference type="InterPro" id="IPR000558">
    <property type="entry name" value="Histone_H2B"/>
</dbReference>
<dbReference type="InterPro" id="IPR055333">
    <property type="entry name" value="HISTONE_H2B_site"/>
</dbReference>
<dbReference type="PANTHER" id="PTHR23428">
    <property type="entry name" value="HISTONE H2B"/>
    <property type="match status" value="1"/>
</dbReference>
<dbReference type="Pfam" id="PF00125">
    <property type="entry name" value="Histone"/>
    <property type="match status" value="1"/>
</dbReference>
<dbReference type="PRINTS" id="PR00621">
    <property type="entry name" value="HISTONEH2B"/>
</dbReference>
<dbReference type="SMART" id="SM00427">
    <property type="entry name" value="H2B"/>
    <property type="match status" value="1"/>
</dbReference>
<dbReference type="SUPFAM" id="SSF47113">
    <property type="entry name" value="Histone-fold"/>
    <property type="match status" value="1"/>
</dbReference>
<dbReference type="PROSITE" id="PS00357">
    <property type="entry name" value="HISTONE_H2B"/>
    <property type="match status" value="1"/>
</dbReference>
<evidence type="ECO:0000250" key="1">
    <source>
        <dbReference type="UniProtKB" id="P23527"/>
    </source>
</evidence>
<evidence type="ECO:0000250" key="2">
    <source>
        <dbReference type="UniProtKB" id="P33778"/>
    </source>
</evidence>
<evidence type="ECO:0000250" key="3">
    <source>
        <dbReference type="UniProtKB" id="P58876"/>
    </source>
</evidence>
<evidence type="ECO:0000250" key="4">
    <source>
        <dbReference type="UniProtKB" id="P62807"/>
    </source>
</evidence>
<evidence type="ECO:0000250" key="5">
    <source>
        <dbReference type="UniProtKB" id="P70696"/>
    </source>
</evidence>
<evidence type="ECO:0000250" key="6">
    <source>
        <dbReference type="UniProtKB" id="Q5QNW6"/>
    </source>
</evidence>
<evidence type="ECO:0000250" key="7">
    <source>
        <dbReference type="UniProtKB" id="Q64475"/>
    </source>
</evidence>
<evidence type="ECO:0000250" key="8">
    <source>
        <dbReference type="UniProtKB" id="Q96A08"/>
    </source>
</evidence>
<evidence type="ECO:0000256" key="9">
    <source>
        <dbReference type="SAM" id="MobiDB-lite"/>
    </source>
</evidence>
<evidence type="ECO:0000269" key="10">
    <source>
    </source>
</evidence>
<evidence type="ECO:0000269" key="11">
    <source>
    </source>
</evidence>
<evidence type="ECO:0000269" key="12">
    <source>
    </source>
</evidence>
<evidence type="ECO:0000305" key="13"/>
<evidence type="ECO:0000312" key="14">
    <source>
        <dbReference type="RGD" id="3855"/>
    </source>
</evidence>